<feature type="chain" id="PRO_0000097056" description="PTPN13-like protein, Y-linked">
    <location>
        <begin position="1"/>
        <end position="147"/>
    </location>
</feature>
<feature type="splice variant" id="VSP_004068" description="In isoform 2." evidence="3">
    <original>YGKVGCISL</original>
    <variation>DGVSPCLPC</variation>
    <location>
        <begin position="63"/>
        <end position="71"/>
    </location>
</feature>
<feature type="splice variant" id="VSP_004069" description="In isoform 2." evidence="3">
    <location>
        <begin position="72"/>
        <end position="147"/>
    </location>
</feature>
<comment type="alternative products">
    <event type="alternative splicing"/>
    <isoform>
        <id>O14603-1</id>
        <name>1</name>
        <sequence type="displayed"/>
    </isoform>
    <isoform>
        <id>O14603-2</id>
        <name>2</name>
        <sequence type="described" ref="VSP_004068 VSP_004069"/>
    </isoform>
</comment>
<comment type="tissue specificity">
    <text evidence="1 2">Expressed in testis. Detected in spermatocytes, spermatids and spermatozoa (at protein level).</text>
</comment>
<comment type="caution">
    <text evidence="4">PRY has multiple identical or highly similar copies on chromosome Y, some of which might be non functional pseudogenes.</text>
</comment>
<protein>
    <recommendedName>
        <fullName>PTPN13-like protein, Y-linked</fullName>
    </recommendedName>
    <alternativeName>
        <fullName>Testis-specific PTP-BL-related Y protein</fullName>
    </alternativeName>
</protein>
<reference key="1">
    <citation type="journal article" date="1997" name="Science">
        <title>Functional coherence of the human Y chromosome.</title>
        <authorList>
            <person name="Lahn B.T."/>
            <person name="Page D.C."/>
        </authorList>
    </citation>
    <scope>NUCLEOTIDE SEQUENCE [MRNA] (ISOFORM 1)</scope>
    <source>
        <tissue>Testis</tissue>
    </source>
</reference>
<reference key="2">
    <citation type="submission" date="2002-05" db="EMBL/GenBank/DDBJ databases">
        <authorList>
            <person name="Lahn B.T."/>
            <person name="Page D.C."/>
        </authorList>
    </citation>
    <scope>SEQUENCE REVISION</scope>
</reference>
<reference key="3">
    <citation type="journal article" date="2003" name="Nature">
        <title>The male-specific region of the human Y chromosome is a mosaic of discrete sequence classes.</title>
        <authorList>
            <person name="Skaletsky H."/>
            <person name="Kuroda-Kawaguchi T."/>
            <person name="Minx P.J."/>
            <person name="Cordum H.S."/>
            <person name="Hillier L.W."/>
            <person name="Brown L.G."/>
            <person name="Repping S."/>
            <person name="Pyntikova T."/>
            <person name="Ali J."/>
            <person name="Bieri T."/>
            <person name="Chinwalla A."/>
            <person name="Delehaunty A."/>
            <person name="Delehaunty K."/>
            <person name="Du H."/>
            <person name="Fewell G."/>
            <person name="Fulton L."/>
            <person name="Fulton R."/>
            <person name="Graves T.A."/>
            <person name="Hou S.-F."/>
            <person name="Latrielle P."/>
            <person name="Leonard S."/>
            <person name="Mardis E."/>
            <person name="Maupin R."/>
            <person name="McPherson J."/>
            <person name="Miner T."/>
            <person name="Nash W."/>
            <person name="Nguyen C."/>
            <person name="Ozersky P."/>
            <person name="Pepin K."/>
            <person name="Rock S."/>
            <person name="Rohlfing T."/>
            <person name="Scott K."/>
            <person name="Schultz B."/>
            <person name="Strong C."/>
            <person name="Tin-Wollam A."/>
            <person name="Yang S.-P."/>
            <person name="Waterston R.H."/>
            <person name="Wilson R.K."/>
            <person name="Rozen S."/>
            <person name="Page D.C."/>
        </authorList>
    </citation>
    <scope>NUCLEOTIDE SEQUENCE [MRNA] (ISOFORM 2)</scope>
</reference>
<reference key="4">
    <citation type="submission" date="2005-07" db="EMBL/GenBank/DDBJ databases">
        <authorList>
            <person name="Mural R.J."/>
            <person name="Istrail S."/>
            <person name="Sutton G.G."/>
            <person name="Florea L."/>
            <person name="Halpern A.L."/>
            <person name="Mobarry C.M."/>
            <person name="Lippert R."/>
            <person name="Walenz B."/>
            <person name="Shatkay H."/>
            <person name="Dew I."/>
            <person name="Miller J.R."/>
            <person name="Flanigan M.J."/>
            <person name="Edwards N.J."/>
            <person name="Bolanos R."/>
            <person name="Fasulo D."/>
            <person name="Halldorsson B.V."/>
            <person name="Hannenhalli S."/>
            <person name="Turner R."/>
            <person name="Yooseph S."/>
            <person name="Lu F."/>
            <person name="Nusskern D.R."/>
            <person name="Shue B.C."/>
            <person name="Zheng X.H."/>
            <person name="Zhong F."/>
            <person name="Delcher A.L."/>
            <person name="Huson D.H."/>
            <person name="Kravitz S.A."/>
            <person name="Mouchard L."/>
            <person name="Reinert K."/>
            <person name="Remington K.A."/>
            <person name="Clark A.G."/>
            <person name="Waterman M.S."/>
            <person name="Eichler E.E."/>
            <person name="Adams M.D."/>
            <person name="Hunkapiller M.W."/>
            <person name="Myers E.W."/>
            <person name="Venter J.C."/>
        </authorList>
    </citation>
    <scope>NUCLEOTIDE SEQUENCE [LARGE SCALE GENOMIC DNA]</scope>
</reference>
<reference key="5">
    <citation type="journal article" date="2004" name="Genome Res.">
        <title>The status, quality, and expansion of the NIH full-length cDNA project: the Mammalian Gene Collection (MGC).</title>
        <authorList>
            <consortium name="The MGC Project Team"/>
        </authorList>
    </citation>
    <scope>NUCLEOTIDE SEQUENCE [LARGE SCALE MRNA] (ISOFORM 1)</scope>
</reference>
<reference key="6">
    <citation type="journal article" date="2001" name="Mol. Hum. Reprod.">
        <title>Characterization of the genomic organization, localization and expression of four PRY genes (PRY1, PRY2, PRY3 and PRY4).</title>
        <authorList>
            <person name="Stouffs K."/>
            <person name="Lissens W."/>
            <person name="Van Landuyt L."/>
            <person name="Tournaye H."/>
            <person name="Van Steirteghem A."/>
            <person name="Liebaers I."/>
        </authorList>
    </citation>
    <scope>TISSUE SPECIFICITY</scope>
</reference>
<reference key="7">
    <citation type="journal article" date="2004" name="Mol. Hum. Reprod.">
        <title>Expression pattern of the Y-linked PRY gene suggests a function in apoptosis but not in spermatogenesis.</title>
        <authorList>
            <person name="Stouffs K."/>
            <person name="Lissens W."/>
            <person name="Verheyen G."/>
            <person name="Van Landuyt L."/>
            <person name="Goossens A."/>
            <person name="Tournaye H."/>
            <person name="Van Steirteghem A."/>
            <person name="Liebaers I."/>
        </authorList>
    </citation>
    <scope>TISSUE SPECIFICITY</scope>
</reference>
<evidence type="ECO:0000269" key="1">
    <source>
    </source>
</evidence>
<evidence type="ECO:0000269" key="2">
    <source>
    </source>
</evidence>
<evidence type="ECO:0000303" key="3">
    <source>
    </source>
</evidence>
<evidence type="ECO:0000305" key="4"/>
<proteinExistence type="evidence at protein level"/>
<keyword id="KW-0025">Alternative splicing</keyword>
<keyword id="KW-1185">Reference proteome</keyword>
<organism>
    <name type="scientific">Homo sapiens</name>
    <name type="common">Human</name>
    <dbReference type="NCBI Taxonomy" id="9606"/>
    <lineage>
        <taxon>Eukaryota</taxon>
        <taxon>Metazoa</taxon>
        <taxon>Chordata</taxon>
        <taxon>Craniata</taxon>
        <taxon>Vertebrata</taxon>
        <taxon>Euteleostomi</taxon>
        <taxon>Mammalia</taxon>
        <taxon>Eutheria</taxon>
        <taxon>Euarchontoglires</taxon>
        <taxon>Primates</taxon>
        <taxon>Haplorrhini</taxon>
        <taxon>Catarrhini</taxon>
        <taxon>Hominidae</taxon>
        <taxon>Homo</taxon>
    </lineage>
</organism>
<gene>
    <name type="primary">PRY</name>
    <name type="synonym">PRY1</name>
    <name type="synonym">PTPN13LY</name>
</gene>
<gene>
    <name type="primary">PRY2</name>
    <name type="synonym">PTPN13LY2</name>
</gene>
<gene>
    <name type="primary">PRYP3</name>
</gene>
<gene>
    <name type="primary">PRYP4</name>
</gene>
<name>PRY_HUMAN</name>
<dbReference type="EMBL" id="AF000988">
    <property type="protein sequence ID" value="AAC51835.2"/>
    <property type="molecule type" value="mRNA"/>
</dbReference>
<dbReference type="EMBL" id="AF517635">
    <property type="protein sequence ID" value="AAN06674.1"/>
    <property type="molecule type" value="mRNA"/>
</dbReference>
<dbReference type="EMBL" id="CH878735">
    <property type="protein sequence ID" value="EAW61212.1"/>
    <property type="molecule type" value="Genomic_DNA"/>
</dbReference>
<dbReference type="EMBL" id="BC113548">
    <property type="protein sequence ID" value="AAI13549.1"/>
    <property type="molecule type" value="mRNA"/>
</dbReference>
<dbReference type="EMBL" id="BC113550">
    <property type="protein sequence ID" value="AAI13551.1"/>
    <property type="molecule type" value="mRNA"/>
</dbReference>
<dbReference type="EMBL" id="BC143893">
    <property type="protein sequence ID" value="AAI43894.1"/>
    <property type="molecule type" value="mRNA"/>
</dbReference>
<dbReference type="EMBL" id="BC171757">
    <property type="protein sequence ID" value="AAI71757.1"/>
    <property type="molecule type" value="mRNA"/>
</dbReference>
<dbReference type="RefSeq" id="NP_001002758.1">
    <property type="nucleotide sequence ID" value="NM_001002758.1"/>
</dbReference>
<dbReference type="RefSeq" id="NP_004667.2">
    <property type="nucleotide sequence ID" value="NM_004676.2"/>
</dbReference>
<dbReference type="RefSeq" id="XP_016885577.1">
    <property type="nucleotide sequence ID" value="XM_017030088.1"/>
</dbReference>
<dbReference type="BioGRID" id="114537">
    <property type="interactions" value="1"/>
</dbReference>
<dbReference type="BioGRID" id="138577">
    <property type="interactions" value="1"/>
</dbReference>
<dbReference type="IntAct" id="O14603">
    <property type="interactions" value="1"/>
</dbReference>
<dbReference type="STRING" id="9606.ENSP00000302319"/>
<dbReference type="BioMuta" id="PRY"/>
<dbReference type="Antibodypedia" id="58336">
    <property type="antibodies" value="32 antibodies from 10 providers"/>
</dbReference>
<dbReference type="Antibodypedia" id="65672">
    <property type="antibodies" value="16 antibodies from 6 providers"/>
</dbReference>
<dbReference type="DNASU" id="9081"/>
<dbReference type="Ensembl" id="ENST00000303728.5">
    <molecule id="O14603-1"/>
    <property type="protein sequence ID" value="ENSP00000302319.1"/>
    <property type="gene ID" value="ENSG00000169789.10"/>
</dbReference>
<dbReference type="Ensembl" id="ENST00000303804.5">
    <molecule id="O14603-1"/>
    <property type="protein sequence ID" value="ENSP00000303300.1"/>
    <property type="gene ID" value="ENSG00000169807.10"/>
</dbReference>
<dbReference type="Ensembl" id="ENST00000472391.1">
    <molecule id="O14603-2"/>
    <property type="protein sequence ID" value="ENSP00000474545.1"/>
    <property type="gene ID" value="ENSG00000169807.10"/>
</dbReference>
<dbReference type="Ensembl" id="ENST00000477123.1">
    <molecule id="O14603-2"/>
    <property type="protein sequence ID" value="ENSP00000474674.1"/>
    <property type="gene ID" value="ENSG00000169789.10"/>
</dbReference>
<dbReference type="UCSC" id="uc004fuy.1">
    <molecule id="O14603-1"/>
    <property type="organism name" value="human"/>
</dbReference>
<dbReference type="AGR" id="HGNC:14024"/>
<dbReference type="AGR" id="HGNC:21504"/>
<dbReference type="AGR" id="HGNC:34020"/>
<dbReference type="AGR" id="HGNC:34021"/>
<dbReference type="DisGeNET" id="442862"/>
<dbReference type="DisGeNET" id="9081"/>
<dbReference type="GeneCards" id="PRY"/>
<dbReference type="GeneCards" id="PRY2"/>
<dbReference type="GeneCards" id="PRYP3"/>
<dbReference type="GeneCards" id="PRYP4"/>
<dbReference type="GeneReviews" id="PRY"/>
<dbReference type="GeneReviews" id="PRY2"/>
<dbReference type="HGNC" id="HGNC:14024">
    <property type="gene designation" value="PRY"/>
</dbReference>
<dbReference type="HGNC" id="HGNC:21504">
    <property type="gene designation" value="PRY2"/>
</dbReference>
<dbReference type="HGNC" id="HGNC:34020">
    <property type="gene designation" value="PRYP3"/>
</dbReference>
<dbReference type="HGNC" id="HGNC:34021">
    <property type="gene designation" value="PRYP4"/>
</dbReference>
<dbReference type="HPA" id="ENSG00000169789">
    <property type="expression patterns" value="Tissue enriched (epididymis)"/>
</dbReference>
<dbReference type="HPA" id="ENSG00000169807">
    <property type="expression patterns" value="Not detected"/>
</dbReference>
<dbReference type="MIM" id="400019">
    <property type="type" value="gene"/>
</dbReference>
<dbReference type="MIM" id="400041">
    <property type="type" value="gene"/>
</dbReference>
<dbReference type="neXtProt" id="NX_O14603"/>
<dbReference type="PharmGKB" id="PA33844"/>
<dbReference type="VEuPathDB" id="HostDB:ENSG00000169763"/>
<dbReference type="VEuPathDB" id="HostDB:ENSG00000169789"/>
<dbReference type="VEuPathDB" id="HostDB:ENSG00000169807"/>
<dbReference type="GeneTree" id="ENSGT00390000001812"/>
<dbReference type="HOGENOM" id="CLU_1839771_0_0_1"/>
<dbReference type="InParanoid" id="O14603"/>
<dbReference type="PAN-GO" id="O14603">
    <property type="GO annotations" value="0 GO annotations based on evolutionary models"/>
</dbReference>
<dbReference type="PhylomeDB" id="O14603"/>
<dbReference type="TreeFam" id="TF341581"/>
<dbReference type="PathwayCommons" id="O14603"/>
<dbReference type="BioGRID-ORCS" id="442862">
    <property type="hits" value="11 hits in 276 CRISPR screens"/>
</dbReference>
<dbReference type="BioGRID-ORCS" id="9081">
    <property type="hits" value="12 hits in 247 CRISPR screens"/>
</dbReference>
<dbReference type="ChiTaRS" id="PRY">
    <property type="organism name" value="human"/>
</dbReference>
<dbReference type="ChiTaRS" id="PRY2">
    <property type="organism name" value="human"/>
</dbReference>
<dbReference type="ChiTaRS" id="PRYP3">
    <property type="organism name" value="human"/>
</dbReference>
<dbReference type="Pharos" id="O14603">
    <property type="development level" value="Tdark"/>
</dbReference>
<dbReference type="PRO" id="PR:O14603"/>
<dbReference type="Proteomes" id="UP000005640">
    <property type="component" value="Chromosome Y"/>
</dbReference>
<dbReference type="RNAct" id="O14603">
    <property type="molecule type" value="protein"/>
</dbReference>
<dbReference type="Bgee" id="ENSG00000169763">
    <property type="expression patterns" value="Expressed in putamen and 15 other cell types or tissues"/>
</dbReference>
<dbReference type="ExpressionAtlas" id="O14603">
    <property type="expression patterns" value="baseline"/>
</dbReference>
<accession>O14603</accession>
<accession>B7ZLM1</accession>
<accession>Q14D09</accession>
<sequence length="147" mass="16512">MGATGLGFLLSWRQDNLNGTDCQGCNILYFSETTGSMCSELSLNRGLEARRKKDLKDSFLWRYGKVGCISLPLREMTAWINPPQISEIFQGYHQRVHGADALSLQTNSLRSRLSSQCLGQSFLLRTLERGRGFRALGDICGHVHEED</sequence>